<sequence>MSVTTWNLNGTKHHVLICNGSSCMRKGGEEATQAIRNKVAELNLDEAVHTTRTCNGRCKDAPVAIVYPSGDWYKQVTEKVAHRIVEEHLAGGCSLKESLIYEYDQKGFVSPENSDSIEGIDKVKSNA</sequence>
<comment type="function">
    <text evidence="1">Ferredoxins are iron-sulfur proteins that transfer electrons in a wide variety of metabolic reactions.</text>
</comment>
<comment type="cofactor">
    <cofactor evidence="1">
        <name>[2Fe-2S] cluster</name>
        <dbReference type="ChEBI" id="CHEBI:190135"/>
    </cofactor>
    <text evidence="1">Binds 1 [2Fe-2S] cluster.</text>
</comment>
<comment type="similarity">
    <text evidence="2">Belongs to the 2Fe2S Shethna-type ferredoxin family.</text>
</comment>
<evidence type="ECO:0000250" key="1"/>
<evidence type="ECO:0000305" key="2"/>
<name>CBIW_PRIMG</name>
<gene>
    <name type="primary">cbiW</name>
</gene>
<feature type="chain" id="PRO_0000187249" description="Putative 2Fe-2S ferredoxin">
    <location>
        <begin position="1"/>
        <end position="127"/>
    </location>
</feature>
<feature type="binding site" evidence="1">
    <location>
        <position position="23"/>
    </location>
    <ligand>
        <name>[2Fe-2S] cluster</name>
        <dbReference type="ChEBI" id="CHEBI:190135"/>
    </ligand>
</feature>
<feature type="binding site" evidence="1">
    <location>
        <position position="54"/>
    </location>
    <ligand>
        <name>[2Fe-2S] cluster</name>
        <dbReference type="ChEBI" id="CHEBI:190135"/>
    </ligand>
</feature>
<feature type="binding site" evidence="1">
    <location>
        <position position="58"/>
    </location>
    <ligand>
        <name>[2Fe-2S] cluster</name>
        <dbReference type="ChEBI" id="CHEBI:190135"/>
    </ligand>
</feature>
<reference key="1">
    <citation type="journal article" date="1998" name="Biochem. J.">
        <title>Cobalamin (vitamin B12) biosynthesis: identification and characterization of a Bacillus megaterium cobI operon.</title>
        <authorList>
            <person name="Raux E."/>
            <person name="Lanois A."/>
            <person name="Warren M.J."/>
            <person name="Rambach A."/>
            <person name="Thermes C."/>
        </authorList>
    </citation>
    <scope>NUCLEOTIDE SEQUENCE [GENOMIC DNA]</scope>
    <source>
        <strain>DSM 509 / CCM 1464 / NBRC 12109</strain>
    </source>
</reference>
<organism>
    <name type="scientific">Priestia megaterium</name>
    <name type="common">Bacillus megaterium</name>
    <dbReference type="NCBI Taxonomy" id="1404"/>
    <lineage>
        <taxon>Bacteria</taxon>
        <taxon>Bacillati</taxon>
        <taxon>Bacillota</taxon>
        <taxon>Bacilli</taxon>
        <taxon>Bacillales</taxon>
        <taxon>Bacillaceae</taxon>
        <taxon>Priestia</taxon>
    </lineage>
</organism>
<accession>O87688</accession>
<keyword id="KW-0001">2Fe-2S</keyword>
<keyword id="KW-0249">Electron transport</keyword>
<keyword id="KW-0408">Iron</keyword>
<keyword id="KW-0411">Iron-sulfur</keyword>
<keyword id="KW-0479">Metal-binding</keyword>
<keyword id="KW-0813">Transport</keyword>
<protein>
    <recommendedName>
        <fullName>Putative 2Fe-2S ferredoxin</fullName>
    </recommendedName>
</protein>
<proteinExistence type="inferred from homology"/>
<dbReference type="EMBL" id="AJ000758">
    <property type="protein sequence ID" value="CAA04306.1"/>
    <property type="molecule type" value="Genomic_DNA"/>
</dbReference>
<dbReference type="PIR" id="T44682">
    <property type="entry name" value="T44682"/>
</dbReference>
<dbReference type="SMR" id="O87688"/>
<dbReference type="GO" id="GO:0051537">
    <property type="term" value="F:2 iron, 2 sulfur cluster binding"/>
    <property type="evidence" value="ECO:0007669"/>
    <property type="project" value="UniProtKB-KW"/>
</dbReference>
<dbReference type="GO" id="GO:0046872">
    <property type="term" value="F:metal ion binding"/>
    <property type="evidence" value="ECO:0007669"/>
    <property type="project" value="UniProtKB-KW"/>
</dbReference>
<dbReference type="CDD" id="cd02980">
    <property type="entry name" value="TRX_Fd_family"/>
    <property type="match status" value="1"/>
</dbReference>
<dbReference type="Gene3D" id="3.40.30.10">
    <property type="entry name" value="Glutaredoxin"/>
    <property type="match status" value="1"/>
</dbReference>
<dbReference type="InterPro" id="IPR036249">
    <property type="entry name" value="Thioredoxin-like_sf"/>
</dbReference>
<dbReference type="Pfam" id="PF01257">
    <property type="entry name" value="2Fe-2S_thioredx"/>
    <property type="match status" value="1"/>
</dbReference>
<dbReference type="SUPFAM" id="SSF52833">
    <property type="entry name" value="Thioredoxin-like"/>
    <property type="match status" value="1"/>
</dbReference>